<comment type="function">
    <text evidence="1 3">Deglycase that catalyzes the deglycation of the Maillard adducts formed between amino groups of proteins and reactive carbonyl groups of glyoxals. Thus, functions as a protein deglycase that repairs methylglyoxal- and glyoxal-glycated proteins, and releases repaired proteins and lactate or glycolate, respectively. Deglycates cysteine, arginine and lysine residues in proteins, and thus reactivates these proteins by reversing glycation by glyoxals. Acts on early glycation intermediates (hemithioacetals and aminocarbinols), preventing the formation of advanced glycation endproducts (AGE) that cause irreversible damage (By similarity). Also displays proteolytic activity (PubMed:11114201).</text>
</comment>
<comment type="catalytic activity">
    <reaction evidence="1">
        <text>N(omega)-(1-hydroxy-2-oxopropyl)-L-arginyl-[protein] + H2O = lactate + L-arginyl-[protein] + H(+)</text>
        <dbReference type="Rhea" id="RHEA:49548"/>
        <dbReference type="Rhea" id="RHEA-COMP:10532"/>
        <dbReference type="Rhea" id="RHEA-COMP:12428"/>
        <dbReference type="ChEBI" id="CHEBI:15377"/>
        <dbReference type="ChEBI" id="CHEBI:15378"/>
        <dbReference type="ChEBI" id="CHEBI:24996"/>
        <dbReference type="ChEBI" id="CHEBI:29965"/>
        <dbReference type="ChEBI" id="CHEBI:131708"/>
        <dbReference type="EC" id="3.5.1.124"/>
    </reaction>
</comment>
<comment type="catalytic activity">
    <reaction evidence="1">
        <text>N(6)-(1-hydroxy-2-oxopropyl)-L-lysyl-[protein] + H2O = lactate + L-lysyl-[protein] + H(+)</text>
        <dbReference type="Rhea" id="RHEA:49552"/>
        <dbReference type="Rhea" id="RHEA-COMP:9752"/>
        <dbReference type="Rhea" id="RHEA-COMP:12429"/>
        <dbReference type="ChEBI" id="CHEBI:15377"/>
        <dbReference type="ChEBI" id="CHEBI:15378"/>
        <dbReference type="ChEBI" id="CHEBI:24996"/>
        <dbReference type="ChEBI" id="CHEBI:29969"/>
        <dbReference type="ChEBI" id="CHEBI:131709"/>
        <dbReference type="EC" id="3.5.1.124"/>
    </reaction>
</comment>
<comment type="catalytic activity">
    <reaction evidence="1">
        <text>S-(1-hydroxy-2-oxopropyl)-L-cysteinyl-[protein] + H2O = lactate + L-cysteinyl-[protein] + H(+)</text>
        <dbReference type="Rhea" id="RHEA:49556"/>
        <dbReference type="Rhea" id="RHEA-COMP:10131"/>
        <dbReference type="Rhea" id="RHEA-COMP:12430"/>
        <dbReference type="ChEBI" id="CHEBI:15377"/>
        <dbReference type="ChEBI" id="CHEBI:15378"/>
        <dbReference type="ChEBI" id="CHEBI:24996"/>
        <dbReference type="ChEBI" id="CHEBI:29950"/>
        <dbReference type="ChEBI" id="CHEBI:131710"/>
        <dbReference type="EC" id="3.5.1.124"/>
    </reaction>
</comment>
<comment type="catalytic activity">
    <reaction evidence="1">
        <text>N(omega)-(1-hydroxy-2-oxoethyl)-L-arginyl-[protein] + H2O = L-arginyl-[protein] + glycolate + H(+)</text>
        <dbReference type="Rhea" id="RHEA:57188"/>
        <dbReference type="Rhea" id="RHEA-COMP:10532"/>
        <dbReference type="Rhea" id="RHEA-COMP:14844"/>
        <dbReference type="ChEBI" id="CHEBI:15377"/>
        <dbReference type="ChEBI" id="CHEBI:15378"/>
        <dbReference type="ChEBI" id="CHEBI:29805"/>
        <dbReference type="ChEBI" id="CHEBI:29965"/>
        <dbReference type="ChEBI" id="CHEBI:141553"/>
        <dbReference type="EC" id="3.5.1.124"/>
    </reaction>
</comment>
<comment type="catalytic activity">
    <reaction evidence="1">
        <text>N(6)-(1-hydroxy-2-oxoethyl)-L-lysyl-[protein] + H2O = glycolate + L-lysyl-[protein] + H(+)</text>
        <dbReference type="Rhea" id="RHEA:57192"/>
        <dbReference type="Rhea" id="RHEA-COMP:9752"/>
        <dbReference type="Rhea" id="RHEA-COMP:14845"/>
        <dbReference type="ChEBI" id="CHEBI:15377"/>
        <dbReference type="ChEBI" id="CHEBI:15378"/>
        <dbReference type="ChEBI" id="CHEBI:29805"/>
        <dbReference type="ChEBI" id="CHEBI:29969"/>
        <dbReference type="ChEBI" id="CHEBI:141554"/>
        <dbReference type="EC" id="3.5.1.124"/>
    </reaction>
</comment>
<comment type="catalytic activity">
    <reaction evidence="1">
        <text>S-(1-hydroxy-2-oxoethyl)-L-cysteinyl-[protein] + H2O = glycolate + L-cysteinyl-[protein] + H(+)</text>
        <dbReference type="Rhea" id="RHEA:57196"/>
        <dbReference type="Rhea" id="RHEA-COMP:10131"/>
        <dbReference type="Rhea" id="RHEA-COMP:14846"/>
        <dbReference type="ChEBI" id="CHEBI:15377"/>
        <dbReference type="ChEBI" id="CHEBI:15378"/>
        <dbReference type="ChEBI" id="CHEBI:29805"/>
        <dbReference type="ChEBI" id="CHEBI:29950"/>
        <dbReference type="ChEBI" id="CHEBI:141555"/>
        <dbReference type="EC" id="3.5.1.124"/>
    </reaction>
</comment>
<comment type="subunit">
    <text evidence="3">Homohexamer formed by a dimer of trimers that assemble into a hollow ring structure.</text>
</comment>
<comment type="subcellular location">
    <subcellularLocation>
        <location evidence="1">Cytoplasm</location>
    </subcellularLocation>
</comment>
<comment type="similarity">
    <text evidence="5">Belongs to the peptidase C56 family.</text>
</comment>
<dbReference type="EC" id="3.5.1.124" evidence="1"/>
<dbReference type="EC" id="3.4.22.-" evidence="6"/>
<dbReference type="EMBL" id="BA000001">
    <property type="protein sequence ID" value="BAA30818.1"/>
    <property type="molecule type" value="Genomic_DNA"/>
</dbReference>
<dbReference type="PIR" id="C71178">
    <property type="entry name" value="C71178"/>
</dbReference>
<dbReference type="RefSeq" id="WP_010885770.1">
    <property type="nucleotide sequence ID" value="NC_000961.1"/>
</dbReference>
<dbReference type="PDB" id="1G2I">
    <property type="method" value="X-ray"/>
    <property type="resolution" value="2.00 A"/>
    <property type="chains" value="A/B/C=1-166"/>
</dbReference>
<dbReference type="PDB" id="6F2F">
    <property type="method" value="X-ray"/>
    <property type="resolution" value="1.65 A"/>
    <property type="chains" value="A/B/C=1-166"/>
</dbReference>
<dbReference type="PDB" id="6F2H">
    <property type="method" value="X-ray"/>
    <property type="resolution" value="2.19 A"/>
    <property type="chains" value="A/B/C/D/E/F/G/H/I/J/K/L=1-166"/>
</dbReference>
<dbReference type="PDB" id="6HF6">
    <property type="method" value="X-ray"/>
    <property type="resolution" value="2.00 A"/>
    <property type="chains" value="A/B/C=1-166"/>
</dbReference>
<dbReference type="PDB" id="6Q3T">
    <property type="method" value="X-ray"/>
    <property type="resolution" value="2.15 A"/>
    <property type="chains" value="A/B/C=1-166"/>
</dbReference>
<dbReference type="PDB" id="7QO8">
    <property type="method" value="X-ray"/>
    <property type="resolution" value="1.95 A"/>
    <property type="chains" value="A/B/C/D/E/F=1-166"/>
</dbReference>
<dbReference type="PDBsum" id="1G2I"/>
<dbReference type="PDBsum" id="6F2F"/>
<dbReference type="PDBsum" id="6F2H"/>
<dbReference type="PDBsum" id="6HF6"/>
<dbReference type="PDBsum" id="6Q3T"/>
<dbReference type="PDBsum" id="7QO8"/>
<dbReference type="SASBDB" id="O59413"/>
<dbReference type="SMR" id="O59413"/>
<dbReference type="STRING" id="70601.gene:9378700"/>
<dbReference type="MEROPS" id="C56.001"/>
<dbReference type="EnsemblBacteria" id="BAA30818">
    <property type="protein sequence ID" value="BAA30818"/>
    <property type="gene ID" value="BAA30818"/>
</dbReference>
<dbReference type="GeneID" id="1442551"/>
<dbReference type="KEGG" id="pho:PH1704"/>
<dbReference type="eggNOG" id="arCOG00769">
    <property type="taxonomic scope" value="Archaea"/>
</dbReference>
<dbReference type="OrthoDB" id="82036at2157"/>
<dbReference type="BRENDA" id="3.4.11.B7">
    <property type="organism ID" value="5244"/>
</dbReference>
<dbReference type="BRENDA" id="3.4.22.B78">
    <property type="organism ID" value="5244"/>
</dbReference>
<dbReference type="EvolutionaryTrace" id="O59413"/>
<dbReference type="Proteomes" id="UP000000752">
    <property type="component" value="Chromosome"/>
</dbReference>
<dbReference type="GO" id="GO:0005737">
    <property type="term" value="C:cytoplasm"/>
    <property type="evidence" value="ECO:0007669"/>
    <property type="project" value="UniProtKB-SubCell"/>
</dbReference>
<dbReference type="GO" id="GO:0008233">
    <property type="term" value="F:peptidase activity"/>
    <property type="evidence" value="ECO:0007669"/>
    <property type="project" value="UniProtKB-KW"/>
</dbReference>
<dbReference type="GO" id="GO:0036524">
    <property type="term" value="F:protein deglycase activity"/>
    <property type="evidence" value="ECO:0007669"/>
    <property type="project" value="UniProtKB-EC"/>
</dbReference>
<dbReference type="GO" id="GO:0006508">
    <property type="term" value="P:proteolysis"/>
    <property type="evidence" value="ECO:0007669"/>
    <property type="project" value="UniProtKB-KW"/>
</dbReference>
<dbReference type="CDD" id="cd03134">
    <property type="entry name" value="GATase1_PfpI_like"/>
    <property type="match status" value="1"/>
</dbReference>
<dbReference type="Gene3D" id="3.40.50.880">
    <property type="match status" value="1"/>
</dbReference>
<dbReference type="InterPro" id="IPR006286">
    <property type="entry name" value="C56_PfpI-like"/>
</dbReference>
<dbReference type="InterPro" id="IPR029062">
    <property type="entry name" value="Class_I_gatase-like"/>
</dbReference>
<dbReference type="InterPro" id="IPR002818">
    <property type="entry name" value="DJ-1/PfpI"/>
</dbReference>
<dbReference type="InterPro" id="IPR053435">
    <property type="entry name" value="Peptidase_C56_Deglycase"/>
</dbReference>
<dbReference type="NCBIfam" id="NF040823">
    <property type="entry name" value="deglyc_PfpI"/>
    <property type="match status" value="1"/>
</dbReference>
<dbReference type="NCBIfam" id="TIGR01382">
    <property type="entry name" value="PfpI"/>
    <property type="match status" value="1"/>
</dbReference>
<dbReference type="PANTHER" id="PTHR42733">
    <property type="entry name" value="DJ-1 PROTEIN"/>
    <property type="match status" value="1"/>
</dbReference>
<dbReference type="PANTHER" id="PTHR42733:SF2">
    <property type="entry name" value="DJ-1_THIJ_PFPI FAMILY PROTEIN"/>
    <property type="match status" value="1"/>
</dbReference>
<dbReference type="Pfam" id="PF01965">
    <property type="entry name" value="DJ-1_PfpI"/>
    <property type="match status" value="1"/>
</dbReference>
<dbReference type="SUPFAM" id="SSF52317">
    <property type="entry name" value="Class I glutamine amidotransferase-like"/>
    <property type="match status" value="1"/>
</dbReference>
<dbReference type="PROSITE" id="PS51276">
    <property type="entry name" value="PEPTIDASE_C56_PFPI"/>
    <property type="match status" value="1"/>
</dbReference>
<name>DEGLY_PYRHO</name>
<organism>
    <name type="scientific">Pyrococcus horikoshii (strain ATCC 700860 / DSM 12428 / JCM 9974 / NBRC 100139 / OT-3)</name>
    <dbReference type="NCBI Taxonomy" id="70601"/>
    <lineage>
        <taxon>Archaea</taxon>
        <taxon>Methanobacteriati</taxon>
        <taxon>Methanobacteriota</taxon>
        <taxon>Thermococci</taxon>
        <taxon>Thermococcales</taxon>
        <taxon>Thermococcaceae</taxon>
        <taxon>Pyrococcus</taxon>
    </lineage>
</organism>
<evidence type="ECO:0000250" key="1">
    <source>
        <dbReference type="UniProtKB" id="Q51732"/>
    </source>
</evidence>
<evidence type="ECO:0000255" key="2">
    <source>
        <dbReference type="PROSITE-ProRule" id="PRU00608"/>
    </source>
</evidence>
<evidence type="ECO:0000269" key="3">
    <source>
    </source>
</evidence>
<evidence type="ECO:0000303" key="4">
    <source>
    </source>
</evidence>
<evidence type="ECO:0000305" key="5"/>
<evidence type="ECO:0000305" key="6">
    <source>
    </source>
</evidence>
<evidence type="ECO:0007829" key="7">
    <source>
        <dbReference type="PDB" id="6F2F"/>
    </source>
</evidence>
<gene>
    <name type="ordered locus">PH1704</name>
</gene>
<sequence>MKVLFLTANEFEDVELIYPYHRLKEEGHEVYIASFERGTITGKHGYSVKVDLTFDKVNPEEFDALVLPGGRAPERVRLNEKAVSIARKMFSEGKPVASICHGPQILISAGVLRGRKGTSYPGIKDDMINAGVEWVDAEVVVDGNWVSSRVPADLYAWMREFVKLLK</sequence>
<feature type="chain" id="PRO_0000157827" description="Deglycase PH1704">
    <location>
        <begin position="1"/>
        <end position="166"/>
    </location>
</feature>
<feature type="domain" description="PfpI endopeptidase" evidence="2">
    <location>
        <begin position="1"/>
        <end position="166"/>
    </location>
</feature>
<feature type="active site" description="Nucleophile" evidence="6">
    <location>
        <position position="100"/>
    </location>
</feature>
<feature type="active site" evidence="2">
    <location>
        <position position="101"/>
    </location>
</feature>
<feature type="strand" evidence="7">
    <location>
        <begin position="2"/>
        <end position="6"/>
    </location>
</feature>
<feature type="helix" evidence="7">
    <location>
        <begin position="13"/>
        <end position="25"/>
    </location>
</feature>
<feature type="strand" evidence="7">
    <location>
        <begin position="29"/>
        <end position="41"/>
    </location>
</feature>
<feature type="strand" evidence="7">
    <location>
        <begin position="47"/>
        <end position="50"/>
    </location>
</feature>
<feature type="helix" evidence="7">
    <location>
        <begin position="54"/>
        <end position="56"/>
    </location>
</feature>
<feature type="helix" evidence="7">
    <location>
        <begin position="59"/>
        <end position="61"/>
    </location>
</feature>
<feature type="strand" evidence="7">
    <location>
        <begin position="63"/>
        <end position="67"/>
    </location>
</feature>
<feature type="helix" evidence="7">
    <location>
        <begin position="72"/>
        <end position="76"/>
    </location>
</feature>
<feature type="helix" evidence="7">
    <location>
        <begin position="80"/>
        <end position="91"/>
    </location>
</feature>
<feature type="strand" evidence="7">
    <location>
        <begin position="96"/>
        <end position="99"/>
    </location>
</feature>
<feature type="turn" evidence="7">
    <location>
        <begin position="100"/>
        <end position="103"/>
    </location>
</feature>
<feature type="helix" evidence="7">
    <location>
        <begin position="104"/>
        <end position="109"/>
    </location>
</feature>
<feature type="helix" evidence="7">
    <location>
        <begin position="121"/>
        <end position="123"/>
    </location>
</feature>
<feature type="helix" evidence="7">
    <location>
        <begin position="124"/>
        <end position="129"/>
    </location>
</feature>
<feature type="strand" evidence="7">
    <location>
        <begin position="140"/>
        <end position="142"/>
    </location>
</feature>
<feature type="strand" evidence="7">
    <location>
        <begin position="145"/>
        <end position="148"/>
    </location>
</feature>
<feature type="helix" evidence="7">
    <location>
        <begin position="151"/>
        <end position="153"/>
    </location>
</feature>
<feature type="helix" evidence="7">
    <location>
        <begin position="154"/>
        <end position="164"/>
    </location>
</feature>
<reference key="1">
    <citation type="journal article" date="1998" name="DNA Res.">
        <title>Complete sequence and gene organization of the genome of a hyper-thermophilic archaebacterium, Pyrococcus horikoshii OT3.</title>
        <authorList>
            <person name="Kawarabayasi Y."/>
            <person name="Sawada M."/>
            <person name="Horikawa H."/>
            <person name="Haikawa Y."/>
            <person name="Hino Y."/>
            <person name="Yamamoto S."/>
            <person name="Sekine M."/>
            <person name="Baba S."/>
            <person name="Kosugi H."/>
            <person name="Hosoyama A."/>
            <person name="Nagai Y."/>
            <person name="Sakai M."/>
            <person name="Ogura K."/>
            <person name="Otsuka R."/>
            <person name="Nakazawa H."/>
            <person name="Takamiya M."/>
            <person name="Ohfuku Y."/>
            <person name="Funahashi T."/>
            <person name="Tanaka T."/>
            <person name="Kudoh Y."/>
            <person name="Yamazaki J."/>
            <person name="Kushida N."/>
            <person name="Oguchi A."/>
            <person name="Aoki K."/>
            <person name="Yoshizawa T."/>
            <person name="Nakamura Y."/>
            <person name="Robb F.T."/>
            <person name="Horikoshi K."/>
            <person name="Masuchi Y."/>
            <person name="Shizuya H."/>
            <person name="Kikuchi H."/>
        </authorList>
    </citation>
    <scope>NUCLEOTIDE SEQUENCE [LARGE SCALE GENOMIC DNA]</scope>
    <source>
        <strain>ATCC 700860 / DSM 12428 / JCM 9974 / NBRC 100139 / OT-3</strain>
    </source>
</reference>
<reference key="2">
    <citation type="journal article" date="2000" name="Proc. Natl. Acad. Sci. U.S.A.">
        <title>Crystal structure of an intracellular protease from Pyrococcus horikoshii at 2-A resolution.</title>
        <authorList>
            <person name="Du X."/>
            <person name="Choi I.-G."/>
            <person name="Kim R."/>
            <person name="Wang W."/>
            <person name="Jancarik J."/>
            <person name="Yokota H."/>
            <person name="Kim S.-H."/>
        </authorList>
    </citation>
    <scope>PROTEIN SEQUENCE OF N-TERMINUS</scope>
    <scope>X-RAY CRYSTALLOGRAPHY (2.0 ANGSTROMS)</scope>
    <scope>FUNCTION</scope>
    <scope>SUBUNIT</scope>
    <scope>ACTIVE SITE</scope>
</reference>
<proteinExistence type="evidence at protein level"/>
<accession>O59413</accession>
<keyword id="KW-0002">3D-structure</keyword>
<keyword id="KW-0963">Cytoplasm</keyword>
<keyword id="KW-0903">Direct protein sequencing</keyword>
<keyword id="KW-0378">Hydrolase</keyword>
<keyword id="KW-0645">Protease</keyword>
<protein>
    <recommendedName>
        <fullName evidence="1">Deglycase PH1704</fullName>
        <ecNumber evidence="1">3.5.1.124</ecNumber>
    </recommendedName>
    <alternativeName>
        <fullName evidence="4">Intracellular protease PH1704</fullName>
        <ecNumber evidence="6">3.4.22.-</ecNumber>
    </alternativeName>
</protein>